<name>YGG0_WIGBR</name>
<proteinExistence type="inferred from homology"/>
<organism>
    <name type="scientific">Wigglesworthia glossinidia brevipalpis</name>
    <dbReference type="NCBI Taxonomy" id="36870"/>
    <lineage>
        <taxon>Bacteria</taxon>
        <taxon>Pseudomonadati</taxon>
        <taxon>Pseudomonadota</taxon>
        <taxon>Gammaproteobacteria</taxon>
        <taxon>Enterobacterales</taxon>
        <taxon>Erwiniaceae</taxon>
        <taxon>Wigglesworthia</taxon>
    </lineage>
</organism>
<accession>Q8D229</accession>
<keyword id="KW-0963">Cytoplasm</keyword>
<keyword id="KW-0238">DNA-binding</keyword>
<keyword id="KW-1185">Reference proteome</keyword>
<gene>
    <name type="ordered locus">WIGBR5260</name>
</gene>
<dbReference type="EMBL" id="BA000021">
    <property type="protein sequence ID" value="BAC24672.1"/>
    <property type="molecule type" value="Genomic_DNA"/>
</dbReference>
<dbReference type="SMR" id="Q8D229"/>
<dbReference type="STRING" id="36870.gene:10369034"/>
<dbReference type="KEGG" id="wbr:ybaB"/>
<dbReference type="eggNOG" id="COG0718">
    <property type="taxonomic scope" value="Bacteria"/>
</dbReference>
<dbReference type="HOGENOM" id="CLU_140930_0_0_6"/>
<dbReference type="Proteomes" id="UP000000562">
    <property type="component" value="Chromosome"/>
</dbReference>
<dbReference type="GO" id="GO:0043590">
    <property type="term" value="C:bacterial nucleoid"/>
    <property type="evidence" value="ECO:0007669"/>
    <property type="project" value="UniProtKB-UniRule"/>
</dbReference>
<dbReference type="GO" id="GO:0005829">
    <property type="term" value="C:cytosol"/>
    <property type="evidence" value="ECO:0007669"/>
    <property type="project" value="TreeGrafter"/>
</dbReference>
<dbReference type="GO" id="GO:0003677">
    <property type="term" value="F:DNA binding"/>
    <property type="evidence" value="ECO:0007669"/>
    <property type="project" value="UniProtKB-UniRule"/>
</dbReference>
<dbReference type="Gene3D" id="3.30.1310.10">
    <property type="entry name" value="Nucleoid-associated protein YbaB-like domain"/>
    <property type="match status" value="1"/>
</dbReference>
<dbReference type="HAMAP" id="MF_00274">
    <property type="entry name" value="DNA_YbaB_EbfC"/>
    <property type="match status" value="1"/>
</dbReference>
<dbReference type="InterPro" id="IPR036894">
    <property type="entry name" value="YbaB-like_sf"/>
</dbReference>
<dbReference type="InterPro" id="IPR004401">
    <property type="entry name" value="YbaB/EbfC"/>
</dbReference>
<dbReference type="NCBIfam" id="TIGR00103">
    <property type="entry name" value="DNA_YbaB_EbfC"/>
    <property type="match status" value="1"/>
</dbReference>
<dbReference type="PANTHER" id="PTHR33449">
    <property type="entry name" value="NUCLEOID-ASSOCIATED PROTEIN YBAB"/>
    <property type="match status" value="1"/>
</dbReference>
<dbReference type="PANTHER" id="PTHR33449:SF1">
    <property type="entry name" value="NUCLEOID-ASSOCIATED PROTEIN YBAB"/>
    <property type="match status" value="1"/>
</dbReference>
<dbReference type="Pfam" id="PF02575">
    <property type="entry name" value="YbaB_DNA_bd"/>
    <property type="match status" value="1"/>
</dbReference>
<dbReference type="PIRSF" id="PIRSF004555">
    <property type="entry name" value="UCP004555"/>
    <property type="match status" value="1"/>
</dbReference>
<dbReference type="SUPFAM" id="SSF82607">
    <property type="entry name" value="YbaB-like"/>
    <property type="match status" value="1"/>
</dbReference>
<feature type="chain" id="PRO_0000170465" description="Nucleoid-associated protein WIGBR5260">
    <location>
        <begin position="1"/>
        <end position="102"/>
    </location>
</feature>
<protein>
    <recommendedName>
        <fullName evidence="1">Nucleoid-associated protein WIGBR5260</fullName>
    </recommendedName>
</protein>
<sequence length="102" mass="11546">MNKLMKQAQKIQEKMKLIQEEISKLEAIGESGAGLVKIKLNGSRYCNYVKIDNSLLKDKEMLEDLIVAAFNDAIRRISEIQQEKIASVSSSIQIPEGFKMPF</sequence>
<reference key="1">
    <citation type="journal article" date="2002" name="Nat. Genet.">
        <title>Genome sequence of the endocellular obligate symbiont of tsetse flies, Wigglesworthia glossinidia.</title>
        <authorList>
            <person name="Akman L."/>
            <person name="Yamashita A."/>
            <person name="Watanabe H."/>
            <person name="Oshima K."/>
            <person name="Shiba T."/>
            <person name="Hattori M."/>
            <person name="Aksoy S."/>
        </authorList>
    </citation>
    <scope>NUCLEOTIDE SEQUENCE [LARGE SCALE GENOMIC DNA]</scope>
</reference>
<comment type="function">
    <text evidence="1">Binds to DNA and alters its conformation. May be involved in regulation of gene expression, nucleoid organization and DNA protection.</text>
</comment>
<comment type="subunit">
    <text evidence="1">Homodimer.</text>
</comment>
<comment type="subcellular location">
    <subcellularLocation>
        <location evidence="1">Cytoplasm</location>
        <location evidence="1">Nucleoid</location>
    </subcellularLocation>
</comment>
<comment type="similarity">
    <text evidence="1">Belongs to the YbaB/EbfC family.</text>
</comment>
<evidence type="ECO:0000255" key="1">
    <source>
        <dbReference type="HAMAP-Rule" id="MF_00274"/>
    </source>
</evidence>